<dbReference type="EC" id="6.3.3.1" evidence="1"/>
<dbReference type="EMBL" id="CP001175">
    <property type="protein sequence ID" value="ACK39149.1"/>
    <property type="molecule type" value="Genomic_DNA"/>
</dbReference>
<dbReference type="RefSeq" id="WP_012581150.1">
    <property type="nucleotide sequence ID" value="NC_011660.1"/>
</dbReference>
<dbReference type="SMR" id="B8DDZ0"/>
<dbReference type="KEGG" id="lmh:LMHCC_0797"/>
<dbReference type="HOGENOM" id="CLU_047116_0_0_9"/>
<dbReference type="UniPathway" id="UPA00074">
    <property type="reaction ID" value="UER00129"/>
</dbReference>
<dbReference type="GO" id="GO:0005829">
    <property type="term" value="C:cytosol"/>
    <property type="evidence" value="ECO:0007669"/>
    <property type="project" value="TreeGrafter"/>
</dbReference>
<dbReference type="GO" id="GO:0005524">
    <property type="term" value="F:ATP binding"/>
    <property type="evidence" value="ECO:0007669"/>
    <property type="project" value="UniProtKB-KW"/>
</dbReference>
<dbReference type="GO" id="GO:0004637">
    <property type="term" value="F:phosphoribosylamine-glycine ligase activity"/>
    <property type="evidence" value="ECO:0007669"/>
    <property type="project" value="TreeGrafter"/>
</dbReference>
<dbReference type="GO" id="GO:0004641">
    <property type="term" value="F:phosphoribosylformylglycinamidine cyclo-ligase activity"/>
    <property type="evidence" value="ECO:0007669"/>
    <property type="project" value="UniProtKB-UniRule"/>
</dbReference>
<dbReference type="GO" id="GO:0006189">
    <property type="term" value="P:'de novo' IMP biosynthetic process"/>
    <property type="evidence" value="ECO:0007669"/>
    <property type="project" value="UniProtKB-UniRule"/>
</dbReference>
<dbReference type="GO" id="GO:0046084">
    <property type="term" value="P:adenine biosynthetic process"/>
    <property type="evidence" value="ECO:0007669"/>
    <property type="project" value="TreeGrafter"/>
</dbReference>
<dbReference type="CDD" id="cd02196">
    <property type="entry name" value="PurM"/>
    <property type="match status" value="1"/>
</dbReference>
<dbReference type="FunFam" id="3.30.1330.10:FF:000001">
    <property type="entry name" value="Phosphoribosylformylglycinamidine cyclo-ligase"/>
    <property type="match status" value="1"/>
</dbReference>
<dbReference type="FunFam" id="3.90.650.10:FF:000001">
    <property type="entry name" value="Phosphoribosylformylglycinamidine cyclo-ligase"/>
    <property type="match status" value="1"/>
</dbReference>
<dbReference type="Gene3D" id="3.90.650.10">
    <property type="entry name" value="PurM-like C-terminal domain"/>
    <property type="match status" value="1"/>
</dbReference>
<dbReference type="Gene3D" id="3.30.1330.10">
    <property type="entry name" value="PurM-like, N-terminal domain"/>
    <property type="match status" value="1"/>
</dbReference>
<dbReference type="HAMAP" id="MF_00741">
    <property type="entry name" value="AIRS"/>
    <property type="match status" value="1"/>
</dbReference>
<dbReference type="InterPro" id="IPR010918">
    <property type="entry name" value="PurM-like_C_dom"/>
</dbReference>
<dbReference type="InterPro" id="IPR036676">
    <property type="entry name" value="PurM-like_C_sf"/>
</dbReference>
<dbReference type="InterPro" id="IPR016188">
    <property type="entry name" value="PurM-like_N"/>
</dbReference>
<dbReference type="InterPro" id="IPR036921">
    <property type="entry name" value="PurM-like_N_sf"/>
</dbReference>
<dbReference type="InterPro" id="IPR004733">
    <property type="entry name" value="PurM_cligase"/>
</dbReference>
<dbReference type="NCBIfam" id="TIGR00878">
    <property type="entry name" value="purM"/>
    <property type="match status" value="1"/>
</dbReference>
<dbReference type="PANTHER" id="PTHR10520:SF12">
    <property type="entry name" value="TRIFUNCTIONAL PURINE BIOSYNTHETIC PROTEIN ADENOSINE-3"/>
    <property type="match status" value="1"/>
</dbReference>
<dbReference type="PANTHER" id="PTHR10520">
    <property type="entry name" value="TRIFUNCTIONAL PURINE BIOSYNTHETIC PROTEIN ADENOSINE-3-RELATED"/>
    <property type="match status" value="1"/>
</dbReference>
<dbReference type="Pfam" id="PF00586">
    <property type="entry name" value="AIRS"/>
    <property type="match status" value="1"/>
</dbReference>
<dbReference type="Pfam" id="PF02769">
    <property type="entry name" value="AIRS_C"/>
    <property type="match status" value="1"/>
</dbReference>
<dbReference type="SUPFAM" id="SSF56042">
    <property type="entry name" value="PurM C-terminal domain-like"/>
    <property type="match status" value="1"/>
</dbReference>
<dbReference type="SUPFAM" id="SSF55326">
    <property type="entry name" value="PurM N-terminal domain-like"/>
    <property type="match status" value="1"/>
</dbReference>
<accession>B8DDZ0</accession>
<sequence length="349" mass="37462">MAENAYSKAGVDVEAGYQVVERIKKHVARTERLGAMGALGSFGGMFDLSSLHLKEPVLVSGTDGVGTKLLLAIEADKHDTIGIDCVAMCVNDILAQGAEPLFFLDYIATGKTDPVKMEQIVKGVADGCEQAGAALIGGETAEMPDMYGSDDYDLAGFTVGAVEKQKLITEGAVKEGDTLIGIPSSGIHSNGYSLVRKIFFKDNELTLDAEISELDVPLVEELLKPTRIYVKPVLEVLKEVDVHGITHVTGGGFVENLPRMLTNDLAVKVELGSWPVLPIFDVMKKYGQLNEMEMYEIFNMGIGMVLAVAKADVERTLEVLVQNGEAAYVIGEVTTRENDAVIFTGGTKG</sequence>
<organism>
    <name type="scientific">Listeria monocytogenes serotype 4a (strain HCC23)</name>
    <dbReference type="NCBI Taxonomy" id="552536"/>
    <lineage>
        <taxon>Bacteria</taxon>
        <taxon>Bacillati</taxon>
        <taxon>Bacillota</taxon>
        <taxon>Bacilli</taxon>
        <taxon>Bacillales</taxon>
        <taxon>Listeriaceae</taxon>
        <taxon>Listeria</taxon>
    </lineage>
</organism>
<gene>
    <name evidence="1" type="primary">purM</name>
    <name type="ordered locus">LMHCC_0797</name>
</gene>
<protein>
    <recommendedName>
        <fullName evidence="1">Phosphoribosylformylglycinamidine cyclo-ligase</fullName>
        <ecNumber evidence="1">6.3.3.1</ecNumber>
    </recommendedName>
    <alternativeName>
        <fullName evidence="1">AIR synthase</fullName>
    </alternativeName>
    <alternativeName>
        <fullName evidence="1">AIRS</fullName>
    </alternativeName>
    <alternativeName>
        <fullName evidence="1">Phosphoribosyl-aminoimidazole synthetase</fullName>
    </alternativeName>
</protein>
<keyword id="KW-0067">ATP-binding</keyword>
<keyword id="KW-0963">Cytoplasm</keyword>
<keyword id="KW-0436">Ligase</keyword>
<keyword id="KW-0547">Nucleotide-binding</keyword>
<keyword id="KW-0658">Purine biosynthesis</keyword>
<evidence type="ECO:0000255" key="1">
    <source>
        <dbReference type="HAMAP-Rule" id="MF_00741"/>
    </source>
</evidence>
<feature type="chain" id="PRO_1000148284" description="Phosphoribosylformylglycinamidine cyclo-ligase">
    <location>
        <begin position="1"/>
        <end position="349"/>
    </location>
</feature>
<proteinExistence type="inferred from homology"/>
<name>PUR5_LISMH</name>
<reference key="1">
    <citation type="journal article" date="2011" name="J. Bacteriol.">
        <title>Genome sequence of lineage III Listeria monocytogenes strain HCC23.</title>
        <authorList>
            <person name="Steele C.L."/>
            <person name="Donaldson J.R."/>
            <person name="Paul D."/>
            <person name="Banes M.M."/>
            <person name="Arick T."/>
            <person name="Bridges S.M."/>
            <person name="Lawrence M.L."/>
        </authorList>
    </citation>
    <scope>NUCLEOTIDE SEQUENCE [LARGE SCALE GENOMIC DNA]</scope>
    <source>
        <strain>HCC23</strain>
    </source>
</reference>
<comment type="catalytic activity">
    <reaction evidence="1">
        <text>2-formamido-N(1)-(5-O-phospho-beta-D-ribosyl)acetamidine + ATP = 5-amino-1-(5-phospho-beta-D-ribosyl)imidazole + ADP + phosphate + H(+)</text>
        <dbReference type="Rhea" id="RHEA:23032"/>
        <dbReference type="ChEBI" id="CHEBI:15378"/>
        <dbReference type="ChEBI" id="CHEBI:30616"/>
        <dbReference type="ChEBI" id="CHEBI:43474"/>
        <dbReference type="ChEBI" id="CHEBI:137981"/>
        <dbReference type="ChEBI" id="CHEBI:147287"/>
        <dbReference type="ChEBI" id="CHEBI:456216"/>
        <dbReference type="EC" id="6.3.3.1"/>
    </reaction>
</comment>
<comment type="pathway">
    <text evidence="1">Purine metabolism; IMP biosynthesis via de novo pathway; 5-amino-1-(5-phospho-D-ribosyl)imidazole from N(2)-formyl-N(1)-(5-phospho-D-ribosyl)glycinamide: step 2/2.</text>
</comment>
<comment type="subcellular location">
    <subcellularLocation>
        <location evidence="1">Cytoplasm</location>
    </subcellularLocation>
</comment>
<comment type="similarity">
    <text evidence="1">Belongs to the AIR synthase family.</text>
</comment>